<evidence type="ECO:0000250" key="1">
    <source>
        <dbReference type="UniProtKB" id="O44249"/>
    </source>
</evidence>
<evidence type="ECO:0000250" key="2">
    <source>
        <dbReference type="UniProtKB" id="Q8MZM3"/>
    </source>
</evidence>
<evidence type="ECO:0000255" key="3">
    <source>
        <dbReference type="PROSITE-ProRule" id="PRU00498"/>
    </source>
</evidence>
<evidence type="ECO:0000269" key="4">
    <source>
    </source>
</evidence>
<evidence type="ECO:0000269" key="5">
    <source>
    </source>
</evidence>
<evidence type="ECO:0000269" key="6">
    <source>
    </source>
</evidence>
<evidence type="ECO:0000269" key="7">
    <source>
    </source>
</evidence>
<evidence type="ECO:0000303" key="8">
    <source>
    </source>
</evidence>
<evidence type="ECO:0000305" key="9"/>
<evidence type="ECO:0000305" key="10">
    <source>
    </source>
</evidence>
<evidence type="ECO:0000305" key="11">
    <source>
    </source>
</evidence>
<evidence type="ECO:0000312" key="12">
    <source>
        <dbReference type="EMBL" id="BAC15602.1"/>
    </source>
</evidence>
<comment type="function">
    <text evidence="1 4 5 6 7">This is a copper-containing oxidase that functions in the formation of pigments such as melanins and other polyphenolic compounds (By similarity). Catalyzes the oxidation of o-diphenols (N-acetyldopamine, 4-methylcatechol and dopamine) (PubMed:12185078, PubMed:16362048, PubMed:9085271). Cannot oxidize monophenols and p-phenols (L-tyrosine, tyramine, gentisic acid and hydroquinone) (PubMed:9085271). Binds to the surface of hemocytes and is involved in hemocyte melanization (By similarity). Activation of the enzyme in response to bacterial lipopolysaccharides (LPS) suggests it may play a role in innate immunity (PubMed:9839951).</text>
</comment>
<comment type="cofactor">
    <cofactor evidence="1">
        <name>Cu(2+)</name>
        <dbReference type="ChEBI" id="CHEBI:29036"/>
    </cofactor>
    <text evidence="1">Binds 2 copper ions per subunit.</text>
</comment>
<comment type="biophysicochemical properties">
    <phDependence>
        <text evidence="6">Optimum pH is 8.0.</text>
    </phDependence>
    <temperatureDependence>
        <text evidence="6">Optimum temperature is 35 degrees Celsius.</text>
    </temperatureDependence>
</comment>
<comment type="subunit">
    <text evidence="5 6">Dimer (PubMed:9085271). Might form a homodimer or a heterodimer with PPO1 (PubMed:9085271). Might interact with PPAF2 (via CLIP domain); the interaction might be required for PPO2 activity (PubMed:16362048).</text>
</comment>
<comment type="subcellular location">
    <subcellularLocation>
        <location evidence="6">Secreted</location>
    </subcellularLocation>
    <text evidence="6">Secreted in the hemolymph.</text>
</comment>
<comment type="tissue specificity">
    <text evidence="4">Hemocytes.</text>
</comment>
<comment type="developmental stage">
    <text evidence="6">Expressed in larvae (at protein level).</text>
</comment>
<comment type="PTM">
    <text evidence="4 6">Precursor cleaved by PPAF1.</text>
</comment>
<comment type="similarity">
    <text evidence="9">Belongs to the tyrosinase family.</text>
</comment>
<comment type="caution">
    <text evidence="9">The sequence was deposited erroneously as PPO1 (PubMed:12185078).</text>
</comment>
<organism evidence="12">
    <name type="scientific">Holotrichia diomphalia</name>
    <name type="common">Korean black chafer</name>
    <dbReference type="NCBI Taxonomy" id="33394"/>
    <lineage>
        <taxon>Eukaryota</taxon>
        <taxon>Metazoa</taxon>
        <taxon>Ecdysozoa</taxon>
        <taxon>Arthropoda</taxon>
        <taxon>Hexapoda</taxon>
        <taxon>Insecta</taxon>
        <taxon>Pterygota</taxon>
        <taxon>Neoptera</taxon>
        <taxon>Endopterygota</taxon>
        <taxon>Coleoptera</taxon>
        <taxon>Polyphaga</taxon>
        <taxon>Scarabaeiformia</taxon>
        <taxon>Scarabaeidae</taxon>
        <taxon>Melolonthinae</taxon>
        <taxon>Holotrichia</taxon>
    </lineage>
</organism>
<accession>Q8I6K2</accession>
<name>PPO2_HOLDI</name>
<proteinExistence type="evidence at protein level"/>
<sequence length="684" mass="78820">MSNTAVLNDLVALYDRPTEPMFRVKAKKSFKVPKEYVTDRFKNVAVEISNRFGEDDSETVTIDSVPLPDLADILTLGREENFSLFIPKHRNLSAKLINIFLQAENPKHLLSIACYAHDRVNPYLFIYALSVALIHRKDTKSLKIPNQIQTFPDKYFDSQVFSQGKEEMTVVPQGLRRPIEIPRDYTASDLEEEHRVAYWREDLGINLHHWHWHLVYPTDGGEIVTKKDRRGELFYYSHQQIVARYNFERFCNALKRVERLTDWQGPIKEAYFPKLDSLVAKRAYPARVQDMTMQDLDIPGQNIKVDVDDMIRWRDRIYRAIADGFITATNGSKMNLDDVTGIDILGNIMESSELSPNRQLYGNLHGFGHLMLSYIHDPRSHHLEPFGVIGDFTTAMRDPIFYRWHAFVDDVFQQFNGSLPRYTAEQLDYAGVQITDVNIKTPNAPDNEFRTFWQQSDVDMSRGVDFQDPGSVFVRFTHLNHEPFSYNITVNNTGNGVQEGTCRIFLAPATDERGNPWLFNNQRVMFVEMDRFKVTLRQGQNTITRNSTQSSVTIPFERTFRDLDTNRPAEGSEELDIFNFCGCGWPHHLLVPKGTPDGFKAQLFVMISNYADDKVEQDLSGSCNDAESYCGVRGGKYPDKRPMGYPFNRVARQGADTLQRFLTGNMIVQNCRIVHSDRTVRPRS</sequence>
<keyword id="KW-0186">Copper</keyword>
<keyword id="KW-0903">Direct protein sequencing</keyword>
<keyword id="KW-1015">Disulfide bond</keyword>
<keyword id="KW-0325">Glycoprotein</keyword>
<keyword id="KW-0391">Immunity</keyword>
<keyword id="KW-0399">Innate immunity</keyword>
<keyword id="KW-0470">Melanin biosynthesis</keyword>
<keyword id="KW-0479">Metal-binding</keyword>
<keyword id="KW-0503">Monooxygenase</keyword>
<keyword id="KW-0560">Oxidoreductase</keyword>
<keyword id="KW-0964">Secreted</keyword>
<keyword id="KW-0865">Zymogen</keyword>
<reference evidence="12" key="1">
    <citation type="journal article" date="2002" name="J. Biol. Chem.">
        <title>A new easter-type serine protease cleaves a masquerade-like protein during prophenoloxidase activation in Holotrichia diomphalia larvae.</title>
        <authorList>
            <person name="Kim M.S."/>
            <person name="Baek M.J."/>
            <person name="Lee M.H."/>
            <person name="Park J.W."/>
            <person name="Lee S.Y."/>
            <person name="Soderhall K."/>
            <person name="Lee B.L."/>
        </authorList>
    </citation>
    <scope>NUCLEOTIDE SEQUENCE [MRNA]</scope>
    <scope>PROTEIN SEQUENCE OF 52-61</scope>
    <scope>FUNCTION</scope>
    <scope>CATALYTIC ACTIVITY</scope>
    <scope>TISSUE SPECIFICITY</scope>
    <scope>PROTEOLYTIC CLEAVAGE</scope>
</reference>
<reference evidence="9" key="2">
    <citation type="journal article" date="1997" name="Mol. Cells">
        <title>Purification and characterization of prophenoloxidase from the hemolymph of coleopteran insect, Holotrichia diomphalia larvae.</title>
        <authorList>
            <person name="Kwon T.H."/>
            <person name="Lee S.Y."/>
            <person name="Lee J.H."/>
            <person name="Choi J.S."/>
            <person name="Kawabata S."/>
            <person name="Iwanaga S."/>
            <person name="Lee B.L."/>
        </authorList>
    </citation>
    <scope>PROTEIN SEQUENCE OF 52-56</scope>
    <scope>FUNCTION</scope>
    <scope>CATALYTIC ACTIVITY</scope>
    <scope>BIOPHYSICOCHEMICAL PROPERTIES</scope>
    <scope>SUBUNIT</scope>
    <scope>SUBCELLULAR LOCATION</scope>
    <scope>DEVELOPMENTAL STAGE</scope>
    <scope>PROTEOLYTIC CLEAVAGE</scope>
</reference>
<reference evidence="9" key="3">
    <citation type="journal article" date="1998" name="Eur. J. Biochem.">
        <title>Molecular cloning of cDNA for pro-phenol-oxidase-activating factor I, a serine protease is induced by lipopolysaccharide or 1,3-beta-glucan in coleopteran insect, Holotrichia diomphalia larvae.</title>
        <authorList>
            <person name="Lee S.Y."/>
            <person name="Cho M.Y."/>
            <person name="Hyun J.H."/>
            <person name="Lee K.M."/>
            <person name="Homma K.I."/>
            <person name="Natori S."/>
            <person name="Kawabata S.I."/>
            <person name="Iwanaga S."/>
            <person name="Lee B.L."/>
        </authorList>
    </citation>
    <scope>FUNCTION</scope>
</reference>
<reference evidence="9" key="4">
    <citation type="journal article" date="2005" name="EMBO J.">
        <title>Crystal structure of a clip-domain serine protease and functional roles of the clip domains.</title>
        <authorList>
            <person name="Piao S."/>
            <person name="Song Y.L."/>
            <person name="Kim J.H."/>
            <person name="Park S.Y."/>
            <person name="Park J.W."/>
            <person name="Lee B.L."/>
            <person name="Oh B.H."/>
            <person name="Ha N.C."/>
        </authorList>
    </citation>
    <scope>FUNCTION</scope>
    <scope>INTERACTION WITH PPAF2</scope>
</reference>
<gene>
    <name evidence="9" type="primary">PPO2</name>
    <name evidence="12" type="synonym">proPO-II</name>
</gene>
<dbReference type="EC" id="1.14.18.-" evidence="4 5 6"/>
<dbReference type="EMBL" id="AB079664">
    <property type="protein sequence ID" value="BAC15602.1"/>
    <property type="molecule type" value="mRNA"/>
</dbReference>
<dbReference type="SMR" id="Q8I6K2"/>
<dbReference type="ELM" id="Q8I6K2"/>
<dbReference type="GlyCosmos" id="Q8I6K2">
    <property type="glycosylation" value="7 sites, No reported glycans"/>
</dbReference>
<dbReference type="GO" id="GO:0005576">
    <property type="term" value="C:extracellular region"/>
    <property type="evidence" value="ECO:0007669"/>
    <property type="project" value="UniProtKB-SubCell"/>
</dbReference>
<dbReference type="GO" id="GO:0046872">
    <property type="term" value="F:metal ion binding"/>
    <property type="evidence" value="ECO:0007669"/>
    <property type="project" value="UniProtKB-KW"/>
</dbReference>
<dbReference type="GO" id="GO:0004503">
    <property type="term" value="F:tyrosinase activity"/>
    <property type="evidence" value="ECO:0007669"/>
    <property type="project" value="UniProtKB-ARBA"/>
</dbReference>
<dbReference type="GO" id="GO:0045087">
    <property type="term" value="P:innate immune response"/>
    <property type="evidence" value="ECO:0007669"/>
    <property type="project" value="UniProtKB-KW"/>
</dbReference>
<dbReference type="GO" id="GO:0042438">
    <property type="term" value="P:melanin biosynthetic process"/>
    <property type="evidence" value="ECO:0007669"/>
    <property type="project" value="UniProtKB-KW"/>
</dbReference>
<dbReference type="FunFam" id="1.10.1280.10:FF:000004">
    <property type="entry name" value="Hemocyanin subunit 2"/>
    <property type="match status" value="1"/>
</dbReference>
<dbReference type="FunFam" id="2.60.40.1520:FF:000001">
    <property type="entry name" value="Hemocyanin subunit 2"/>
    <property type="match status" value="1"/>
</dbReference>
<dbReference type="Gene3D" id="1.10.1280.10">
    <property type="entry name" value="Di-copper center containing domain from catechol oxidase"/>
    <property type="match status" value="1"/>
</dbReference>
<dbReference type="Gene3D" id="2.60.40.1520">
    <property type="entry name" value="Hemocyanin, C-terminal domain"/>
    <property type="match status" value="1"/>
</dbReference>
<dbReference type="Gene3D" id="1.20.1370.10">
    <property type="entry name" value="Hemocyanin, N-terminal domain"/>
    <property type="match status" value="1"/>
</dbReference>
<dbReference type="InterPro" id="IPR008922">
    <property type="entry name" value="Di-copper_centre_dom_sf"/>
</dbReference>
<dbReference type="InterPro" id="IPR013788">
    <property type="entry name" value="Hemocyanin/hexamerin"/>
</dbReference>
<dbReference type="InterPro" id="IPR000896">
    <property type="entry name" value="Hemocyanin/hexamerin_mid_dom"/>
</dbReference>
<dbReference type="InterPro" id="IPR005203">
    <property type="entry name" value="Hemocyanin_C"/>
</dbReference>
<dbReference type="InterPro" id="IPR037020">
    <property type="entry name" value="Hemocyanin_C_sf"/>
</dbReference>
<dbReference type="InterPro" id="IPR005204">
    <property type="entry name" value="Hemocyanin_N"/>
</dbReference>
<dbReference type="InterPro" id="IPR036697">
    <property type="entry name" value="Hemocyanin_N_sf"/>
</dbReference>
<dbReference type="InterPro" id="IPR014756">
    <property type="entry name" value="Ig_E-set"/>
</dbReference>
<dbReference type="InterPro" id="IPR002227">
    <property type="entry name" value="Tyrosinase_Cu-bd"/>
</dbReference>
<dbReference type="PANTHER" id="PTHR11511">
    <property type="entry name" value="LARVAL STORAGE PROTEIN/PHENOLOXIDASE"/>
    <property type="match status" value="1"/>
</dbReference>
<dbReference type="PANTHER" id="PTHR11511:SF4">
    <property type="entry name" value="PHENOLOXIDASE 2-RELATED"/>
    <property type="match status" value="1"/>
</dbReference>
<dbReference type="Pfam" id="PF03723">
    <property type="entry name" value="Hemocyanin_C"/>
    <property type="match status" value="1"/>
</dbReference>
<dbReference type="Pfam" id="PF00372">
    <property type="entry name" value="Hemocyanin_M"/>
    <property type="match status" value="1"/>
</dbReference>
<dbReference type="Pfam" id="PF03722">
    <property type="entry name" value="Hemocyanin_N"/>
    <property type="match status" value="1"/>
</dbReference>
<dbReference type="PRINTS" id="PR00187">
    <property type="entry name" value="HAEMOCYANIN"/>
</dbReference>
<dbReference type="SUPFAM" id="SSF48056">
    <property type="entry name" value="Di-copper centre-containing domain"/>
    <property type="match status" value="1"/>
</dbReference>
<dbReference type="SUPFAM" id="SSF81296">
    <property type="entry name" value="E set domains"/>
    <property type="match status" value="1"/>
</dbReference>
<dbReference type="SUPFAM" id="SSF48050">
    <property type="entry name" value="Hemocyanin, N-terminal domain"/>
    <property type="match status" value="1"/>
</dbReference>
<dbReference type="PROSITE" id="PS00209">
    <property type="entry name" value="HEMOCYANIN_1"/>
    <property type="match status" value="1"/>
</dbReference>
<dbReference type="PROSITE" id="PS00210">
    <property type="entry name" value="HEMOCYANIN_2"/>
    <property type="match status" value="1"/>
</dbReference>
<dbReference type="PROSITE" id="PS00498">
    <property type="entry name" value="TYROSINASE_2"/>
    <property type="match status" value="1"/>
</dbReference>
<feature type="propeptide" id="PRO_0000443314" description="Removed by PPAF1" evidence="4">
    <location>
        <begin position="1"/>
        <end position="51"/>
    </location>
</feature>
<feature type="chain" id="PRO_0000443315" description="Phenoloxidase 2" evidence="10 11">
    <location>
        <begin position="52"/>
        <end position="684"/>
    </location>
</feature>
<feature type="active site" description="Proton acceptor" evidence="2">
    <location>
        <position position="350"/>
    </location>
</feature>
<feature type="binding site" evidence="1">
    <location>
        <position position="209"/>
    </location>
    <ligand>
        <name>Cu cation</name>
        <dbReference type="ChEBI" id="CHEBI:23378"/>
        <label>A</label>
    </ligand>
</feature>
<feature type="binding site" evidence="1">
    <location>
        <position position="213"/>
    </location>
    <ligand>
        <name>Cu cation</name>
        <dbReference type="ChEBI" id="CHEBI:23378"/>
        <label>A</label>
    </ligand>
</feature>
<feature type="binding site" evidence="1">
    <location>
        <position position="238"/>
    </location>
    <ligand>
        <name>Cu cation</name>
        <dbReference type="ChEBI" id="CHEBI:23378"/>
        <label>A</label>
    </ligand>
</feature>
<feature type="binding site" evidence="1">
    <location>
        <position position="365"/>
    </location>
    <ligand>
        <name>Cu cation</name>
        <dbReference type="ChEBI" id="CHEBI:23378"/>
        <label>B</label>
    </ligand>
</feature>
<feature type="binding site" evidence="1">
    <location>
        <position position="369"/>
    </location>
    <ligand>
        <name>Cu cation</name>
        <dbReference type="ChEBI" id="CHEBI:23378"/>
        <label>B</label>
    </ligand>
</feature>
<feature type="binding site" evidence="1">
    <location>
        <position position="405"/>
    </location>
    <ligand>
        <name>Cu cation</name>
        <dbReference type="ChEBI" id="CHEBI:23378"/>
        <label>B</label>
    </ligand>
</feature>
<feature type="glycosylation site" description="N-linked (GlcNAc...) asparagine" evidence="3">
    <location>
        <position position="81"/>
    </location>
</feature>
<feature type="glycosylation site" description="N-linked (GlcNAc...) asparagine" evidence="3">
    <location>
        <position position="91"/>
    </location>
</feature>
<feature type="glycosylation site" description="N-linked (GlcNAc...) asparagine" evidence="3">
    <location>
        <position position="330"/>
    </location>
</feature>
<feature type="glycosylation site" description="N-linked (GlcNAc...) asparagine" evidence="3">
    <location>
        <position position="416"/>
    </location>
</feature>
<feature type="glycosylation site" description="N-linked (GlcNAc...) asparagine" evidence="3">
    <location>
        <position position="487"/>
    </location>
</feature>
<feature type="glycosylation site" description="N-linked (GlcNAc...) asparagine" evidence="3">
    <location>
        <position position="491"/>
    </location>
</feature>
<feature type="glycosylation site" description="N-linked (GlcNAc...) asparagine" evidence="3">
    <location>
        <position position="546"/>
    </location>
</feature>
<feature type="disulfide bond" evidence="1">
    <location>
        <begin position="581"/>
        <end position="623"/>
    </location>
</feature>
<feature type="disulfide bond" evidence="1">
    <location>
        <begin position="583"/>
        <end position="630"/>
    </location>
</feature>
<protein>
    <recommendedName>
        <fullName evidence="9">Phenoloxidase 2</fullName>
        <ecNumber evidence="4 5 6">1.14.18.-</ecNumber>
    </recommendedName>
    <alternativeName>
        <fullName evidence="8">Prophenoloxidase-II</fullName>
    </alternativeName>
</protein>